<proteinExistence type="inferred from homology"/>
<organism>
    <name type="scientific">Escherichia coli O6:H1 (strain CFT073 / ATCC 700928 / UPEC)</name>
    <dbReference type="NCBI Taxonomy" id="199310"/>
    <lineage>
        <taxon>Bacteria</taxon>
        <taxon>Pseudomonadati</taxon>
        <taxon>Pseudomonadota</taxon>
        <taxon>Gammaproteobacteria</taxon>
        <taxon>Enterobacterales</taxon>
        <taxon>Enterobacteriaceae</taxon>
        <taxon>Escherichia</taxon>
    </lineage>
</organism>
<name>AAEA_ECOL6</name>
<keyword id="KW-0997">Cell inner membrane</keyword>
<keyword id="KW-1003">Cell membrane</keyword>
<keyword id="KW-0472">Membrane</keyword>
<keyword id="KW-1185">Reference proteome</keyword>
<keyword id="KW-0812">Transmembrane</keyword>
<keyword id="KW-1133">Transmembrane helix</keyword>
<keyword id="KW-0813">Transport</keyword>
<protein>
    <recommendedName>
        <fullName evidence="1">p-hydroxybenzoic acid efflux pump subunit AaeA</fullName>
        <shortName evidence="1">pHBA efflux pump protein A</shortName>
    </recommendedName>
</protein>
<feature type="chain" id="PRO_0000201852" description="p-hydroxybenzoic acid efflux pump subunit AaeA">
    <location>
        <begin position="1"/>
        <end position="310"/>
    </location>
</feature>
<feature type="transmembrane region" description="Helical" evidence="1">
    <location>
        <begin position="12"/>
        <end position="32"/>
    </location>
</feature>
<sequence length="310" mass="34761">MKTLIRKFSRTAITVVLVILAFIAIFNAWVYYTESPWTRDARFSADVVAIAPDVSGLITQVNVHDNQLVKKGQVLFTIDQPRYQKALEEAQADVAYYQVLAQEKRQEAGRRNRLGVQAMSREEIDQANNVLQTVLHQLAKAQATRDLAKLDLERTVIRAPADGWVTNLNVYTGEFITRGSTAVALVKQNSFYVLAYMEETKLEGVRPGYRAEITPLGSNKVLKGTVDSVAAGVTNASSTRDDKGMATIDSNLEWVRLAQRVPVRIRLDNQQENIWPAGTTATVVVTGKQDRDESQDSFFRKMAHRLREFG</sequence>
<gene>
    <name evidence="1" type="primary">aaeA</name>
    <name type="ordered locus">c3996</name>
</gene>
<comment type="function">
    <text evidence="1">Forms an efflux pump with AaeB.</text>
</comment>
<comment type="subcellular location">
    <subcellularLocation>
        <location evidence="1">Cell inner membrane</location>
        <topology evidence="1">Single-pass membrane protein</topology>
    </subcellularLocation>
</comment>
<comment type="induction">
    <text evidence="1">Positively coregulated with aaeB and aaeX by AaeR.</text>
</comment>
<comment type="similarity">
    <text evidence="1">Belongs to the membrane fusion protein (MFP) (TC 8.A.1) family.</text>
</comment>
<accession>Q8FD50</accession>
<reference key="1">
    <citation type="journal article" date="2002" name="Proc. Natl. Acad. Sci. U.S.A.">
        <title>Extensive mosaic structure revealed by the complete genome sequence of uropathogenic Escherichia coli.</title>
        <authorList>
            <person name="Welch R.A."/>
            <person name="Burland V."/>
            <person name="Plunkett G. III"/>
            <person name="Redford P."/>
            <person name="Roesch P."/>
            <person name="Rasko D."/>
            <person name="Buckles E.L."/>
            <person name="Liou S.-R."/>
            <person name="Boutin A."/>
            <person name="Hackett J."/>
            <person name="Stroud D."/>
            <person name="Mayhew G.F."/>
            <person name="Rose D.J."/>
            <person name="Zhou S."/>
            <person name="Schwartz D.C."/>
            <person name="Perna N.T."/>
            <person name="Mobley H.L.T."/>
            <person name="Donnenberg M.S."/>
            <person name="Blattner F.R."/>
        </authorList>
    </citation>
    <scope>NUCLEOTIDE SEQUENCE [LARGE SCALE GENOMIC DNA]</scope>
    <source>
        <strain>CFT073 / ATCC 700928 / UPEC</strain>
    </source>
</reference>
<dbReference type="EMBL" id="AE014075">
    <property type="protein sequence ID" value="AAN82436.1"/>
    <property type="molecule type" value="Genomic_DNA"/>
</dbReference>
<dbReference type="RefSeq" id="WP_000854033.1">
    <property type="nucleotide sequence ID" value="NZ_CP051263.1"/>
</dbReference>
<dbReference type="SMR" id="Q8FD50"/>
<dbReference type="STRING" id="199310.c3996"/>
<dbReference type="KEGG" id="ecc:c3996"/>
<dbReference type="eggNOG" id="COG1566">
    <property type="taxonomic scope" value="Bacteria"/>
</dbReference>
<dbReference type="HOGENOM" id="CLU_018816_15_2_6"/>
<dbReference type="BioCyc" id="ECOL199310:C3996-MONOMER"/>
<dbReference type="Proteomes" id="UP000001410">
    <property type="component" value="Chromosome"/>
</dbReference>
<dbReference type="GO" id="GO:0005886">
    <property type="term" value="C:plasma membrane"/>
    <property type="evidence" value="ECO:0007669"/>
    <property type="project" value="UniProtKB-SubCell"/>
</dbReference>
<dbReference type="GO" id="GO:0022857">
    <property type="term" value="F:transmembrane transporter activity"/>
    <property type="evidence" value="ECO:0007669"/>
    <property type="project" value="UniProtKB-UniRule"/>
</dbReference>
<dbReference type="FunFam" id="2.40.30.170:FF:000002">
    <property type="entry name" value="p-hydroxybenzoic acid efflux pump subunit AaeA"/>
    <property type="match status" value="1"/>
</dbReference>
<dbReference type="FunFam" id="2.40.50.100:FF:000018">
    <property type="entry name" value="p-hydroxybenzoic acid efflux pump subunit AaeA"/>
    <property type="match status" value="1"/>
</dbReference>
<dbReference type="Gene3D" id="2.40.30.170">
    <property type="match status" value="1"/>
</dbReference>
<dbReference type="Gene3D" id="2.40.50.100">
    <property type="match status" value="1"/>
</dbReference>
<dbReference type="HAMAP" id="MF_01544">
    <property type="entry name" value="AaeA"/>
    <property type="match status" value="1"/>
</dbReference>
<dbReference type="InterPro" id="IPR043602">
    <property type="entry name" value="CusB-like_dom_1"/>
</dbReference>
<dbReference type="InterPro" id="IPR032317">
    <property type="entry name" value="CusB_D23"/>
</dbReference>
<dbReference type="InterPro" id="IPR050393">
    <property type="entry name" value="MFP_Efflux_Pump"/>
</dbReference>
<dbReference type="InterPro" id="IPR022871">
    <property type="entry name" value="PHBA_efflux_pump_AaeA"/>
</dbReference>
<dbReference type="InterPro" id="IPR006143">
    <property type="entry name" value="RND_pump_MFP"/>
</dbReference>
<dbReference type="NCBIfam" id="NF007850">
    <property type="entry name" value="PRK10559.1"/>
    <property type="match status" value="1"/>
</dbReference>
<dbReference type="NCBIfam" id="TIGR01730">
    <property type="entry name" value="RND_mfp"/>
    <property type="match status" value="1"/>
</dbReference>
<dbReference type="PANTHER" id="PTHR30367:SF12">
    <property type="entry name" value="P-HYDROXYBENZOIC ACID EFFLUX PUMP SUBUNIT AAEA"/>
    <property type="match status" value="1"/>
</dbReference>
<dbReference type="PANTHER" id="PTHR30367">
    <property type="entry name" value="P-HYDROXYBENZOIC ACID EFFLUX PUMP SUBUNIT AAEA-RELATED"/>
    <property type="match status" value="1"/>
</dbReference>
<dbReference type="Pfam" id="PF00529">
    <property type="entry name" value="CusB_dom_1"/>
    <property type="match status" value="1"/>
</dbReference>
<dbReference type="Pfam" id="PF16576">
    <property type="entry name" value="HlyD_D23"/>
    <property type="match status" value="1"/>
</dbReference>
<dbReference type="SUPFAM" id="SSF111369">
    <property type="entry name" value="HlyD-like secretion proteins"/>
    <property type="match status" value="1"/>
</dbReference>
<evidence type="ECO:0000255" key="1">
    <source>
        <dbReference type="HAMAP-Rule" id="MF_01544"/>
    </source>
</evidence>